<name>YBJQ_ECOLI</name>
<comment type="interaction">
    <interactant intactId="EBI-544395">
        <id>P0A8C1</id>
    </interactant>
    <interactant intactId="EBI-543760">
        <id>P67910</id>
        <label>hldD</label>
    </interactant>
    <organismsDiffer>false</organismsDiffer>
    <experiments>2</experiments>
</comment>
<comment type="similarity">
    <text evidence="1">Belongs to the UPF0145 family.</text>
</comment>
<accession>P0A8C1</accession>
<accession>P75819</accession>
<evidence type="ECO:0000305" key="1"/>
<gene>
    <name type="primary">ybjQ</name>
    <name type="ordered locus">b0866</name>
    <name type="ordered locus">JW0850</name>
</gene>
<keyword id="KW-1185">Reference proteome</keyword>
<organism>
    <name type="scientific">Escherichia coli (strain K12)</name>
    <dbReference type="NCBI Taxonomy" id="83333"/>
    <lineage>
        <taxon>Bacteria</taxon>
        <taxon>Pseudomonadati</taxon>
        <taxon>Pseudomonadota</taxon>
        <taxon>Gammaproteobacteria</taxon>
        <taxon>Enterobacterales</taxon>
        <taxon>Enterobacteriaceae</taxon>
        <taxon>Escherichia</taxon>
    </lineage>
</organism>
<sequence length="107" mass="11437">MQFSTTPTLEGQTIVEYCGVVTGEAILGANIFRDFFAGIRDIVGGRSGAYEKELRKAREIAFEELGSQARALGADAVVGIDIDYETVGQNGSMLMVSVSGTAVKTRR</sequence>
<dbReference type="EMBL" id="U00096">
    <property type="protein sequence ID" value="AAC73953.1"/>
    <property type="molecule type" value="Genomic_DNA"/>
</dbReference>
<dbReference type="EMBL" id="AP009048">
    <property type="protein sequence ID" value="BAA35580.1"/>
    <property type="molecule type" value="Genomic_DNA"/>
</dbReference>
<dbReference type="PIR" id="B64825">
    <property type="entry name" value="B64825"/>
</dbReference>
<dbReference type="RefSeq" id="NP_415387.1">
    <property type="nucleotide sequence ID" value="NC_000913.3"/>
</dbReference>
<dbReference type="RefSeq" id="WP_001160737.1">
    <property type="nucleotide sequence ID" value="NZ_STEB01000019.1"/>
</dbReference>
<dbReference type="SMR" id="P0A8C1"/>
<dbReference type="BioGRID" id="4263135">
    <property type="interactions" value="28"/>
</dbReference>
<dbReference type="DIP" id="DIP-48266N"/>
<dbReference type="FunCoup" id="P0A8C1">
    <property type="interactions" value="251"/>
</dbReference>
<dbReference type="IntAct" id="P0A8C1">
    <property type="interactions" value="1"/>
</dbReference>
<dbReference type="STRING" id="511145.b0866"/>
<dbReference type="jPOST" id="P0A8C1"/>
<dbReference type="PaxDb" id="511145-b0866"/>
<dbReference type="EnsemblBacteria" id="AAC73953">
    <property type="protein sequence ID" value="AAC73953"/>
    <property type="gene ID" value="b0866"/>
</dbReference>
<dbReference type="GeneID" id="945493"/>
<dbReference type="KEGG" id="ecj:JW0850"/>
<dbReference type="KEGG" id="eco:b0866"/>
<dbReference type="KEGG" id="ecoc:C3026_05390"/>
<dbReference type="PATRIC" id="fig|511145.12.peg.895"/>
<dbReference type="EchoBASE" id="EB3450"/>
<dbReference type="eggNOG" id="COG0393">
    <property type="taxonomic scope" value="Bacteria"/>
</dbReference>
<dbReference type="HOGENOM" id="CLU_117144_3_0_6"/>
<dbReference type="InParanoid" id="P0A8C1"/>
<dbReference type="OMA" id="SGEAIMG"/>
<dbReference type="OrthoDB" id="9796448at2"/>
<dbReference type="PhylomeDB" id="P0A8C1"/>
<dbReference type="BioCyc" id="EcoCyc:G6451-MONOMER"/>
<dbReference type="PRO" id="PR:P0A8C1"/>
<dbReference type="Proteomes" id="UP000000625">
    <property type="component" value="Chromosome"/>
</dbReference>
<dbReference type="GO" id="GO:0005886">
    <property type="term" value="C:plasma membrane"/>
    <property type="evidence" value="ECO:0007005"/>
    <property type="project" value="EcoCyc"/>
</dbReference>
<dbReference type="Gene3D" id="3.30.110.70">
    <property type="entry name" value="Hypothetical protein apc22750. Chain B"/>
    <property type="match status" value="1"/>
</dbReference>
<dbReference type="HAMAP" id="MF_00338">
    <property type="entry name" value="UPF0145"/>
    <property type="match status" value="1"/>
</dbReference>
<dbReference type="InterPro" id="IPR035439">
    <property type="entry name" value="UPF0145_dom_sf"/>
</dbReference>
<dbReference type="InterPro" id="IPR002765">
    <property type="entry name" value="UPF0145_YbjQ-like"/>
</dbReference>
<dbReference type="NCBIfam" id="NF002776">
    <property type="entry name" value="PRK02877.1"/>
    <property type="match status" value="1"/>
</dbReference>
<dbReference type="PANTHER" id="PTHR34068">
    <property type="entry name" value="UPF0145 PROTEIN YBJQ"/>
    <property type="match status" value="1"/>
</dbReference>
<dbReference type="PANTHER" id="PTHR34068:SF1">
    <property type="entry name" value="UPF0145 PROTEIN YBJQ"/>
    <property type="match status" value="1"/>
</dbReference>
<dbReference type="Pfam" id="PF01906">
    <property type="entry name" value="YbjQ_1"/>
    <property type="match status" value="1"/>
</dbReference>
<dbReference type="SUPFAM" id="SSF117782">
    <property type="entry name" value="YbjQ-like"/>
    <property type="match status" value="1"/>
</dbReference>
<protein>
    <recommendedName>
        <fullName>UPF0145 protein YbjQ</fullName>
    </recommendedName>
</protein>
<proteinExistence type="evidence at protein level"/>
<feature type="chain" id="PRO_0000138465" description="UPF0145 protein YbjQ">
    <location>
        <begin position="1"/>
        <end position="107"/>
    </location>
</feature>
<reference key="1">
    <citation type="journal article" date="1996" name="DNA Res.">
        <title>A 718-kb DNA sequence of the Escherichia coli K-12 genome corresponding to the 12.7-28.0 min region on the linkage map.</title>
        <authorList>
            <person name="Oshima T."/>
            <person name="Aiba H."/>
            <person name="Baba T."/>
            <person name="Fujita K."/>
            <person name="Hayashi K."/>
            <person name="Honjo A."/>
            <person name="Ikemoto K."/>
            <person name="Inada T."/>
            <person name="Itoh T."/>
            <person name="Kajihara M."/>
            <person name="Kanai K."/>
            <person name="Kashimoto K."/>
            <person name="Kimura S."/>
            <person name="Kitagawa M."/>
            <person name="Makino K."/>
            <person name="Masuda S."/>
            <person name="Miki T."/>
            <person name="Mizobuchi K."/>
            <person name="Mori H."/>
            <person name="Motomura K."/>
            <person name="Nakamura Y."/>
            <person name="Nashimoto H."/>
            <person name="Nishio Y."/>
            <person name="Saito N."/>
            <person name="Sampei G."/>
            <person name="Seki Y."/>
            <person name="Tagami H."/>
            <person name="Takemoto K."/>
            <person name="Wada C."/>
            <person name="Yamamoto Y."/>
            <person name="Yano M."/>
            <person name="Horiuchi T."/>
        </authorList>
    </citation>
    <scope>NUCLEOTIDE SEQUENCE [LARGE SCALE GENOMIC DNA]</scope>
    <source>
        <strain>K12 / W3110 / ATCC 27325 / DSM 5911</strain>
    </source>
</reference>
<reference key="2">
    <citation type="journal article" date="1997" name="Science">
        <title>The complete genome sequence of Escherichia coli K-12.</title>
        <authorList>
            <person name="Blattner F.R."/>
            <person name="Plunkett G. III"/>
            <person name="Bloch C.A."/>
            <person name="Perna N.T."/>
            <person name="Burland V."/>
            <person name="Riley M."/>
            <person name="Collado-Vides J."/>
            <person name="Glasner J.D."/>
            <person name="Rode C.K."/>
            <person name="Mayhew G.F."/>
            <person name="Gregor J."/>
            <person name="Davis N.W."/>
            <person name="Kirkpatrick H.A."/>
            <person name="Goeden M.A."/>
            <person name="Rose D.J."/>
            <person name="Mau B."/>
            <person name="Shao Y."/>
        </authorList>
    </citation>
    <scope>NUCLEOTIDE SEQUENCE [LARGE SCALE GENOMIC DNA]</scope>
    <source>
        <strain>K12 / MG1655 / ATCC 47076</strain>
    </source>
</reference>
<reference key="3">
    <citation type="journal article" date="2006" name="Mol. Syst. Biol.">
        <title>Highly accurate genome sequences of Escherichia coli K-12 strains MG1655 and W3110.</title>
        <authorList>
            <person name="Hayashi K."/>
            <person name="Morooka N."/>
            <person name="Yamamoto Y."/>
            <person name="Fujita K."/>
            <person name="Isono K."/>
            <person name="Choi S."/>
            <person name="Ohtsubo E."/>
            <person name="Baba T."/>
            <person name="Wanner B.L."/>
            <person name="Mori H."/>
            <person name="Horiuchi T."/>
        </authorList>
    </citation>
    <scope>NUCLEOTIDE SEQUENCE [LARGE SCALE GENOMIC DNA]</scope>
    <source>
        <strain>K12 / W3110 / ATCC 27325 / DSM 5911</strain>
    </source>
</reference>